<gene>
    <name evidence="1" type="primary">fabH</name>
    <name type="ordered locus">SARI_01805</name>
</gene>
<proteinExistence type="inferred from homology"/>
<dbReference type="EC" id="2.3.1.180" evidence="1"/>
<dbReference type="EMBL" id="CP000880">
    <property type="protein sequence ID" value="ABX21691.1"/>
    <property type="molecule type" value="Genomic_DNA"/>
</dbReference>
<dbReference type="SMR" id="A9MGC9"/>
<dbReference type="STRING" id="41514.SARI_01805"/>
<dbReference type="KEGG" id="ses:SARI_01805"/>
<dbReference type="HOGENOM" id="CLU_039592_4_1_6"/>
<dbReference type="UniPathway" id="UPA00094"/>
<dbReference type="Proteomes" id="UP000002084">
    <property type="component" value="Chromosome"/>
</dbReference>
<dbReference type="GO" id="GO:0005737">
    <property type="term" value="C:cytoplasm"/>
    <property type="evidence" value="ECO:0007669"/>
    <property type="project" value="UniProtKB-SubCell"/>
</dbReference>
<dbReference type="GO" id="GO:0004315">
    <property type="term" value="F:3-oxoacyl-[acyl-carrier-protein] synthase activity"/>
    <property type="evidence" value="ECO:0007669"/>
    <property type="project" value="InterPro"/>
</dbReference>
<dbReference type="GO" id="GO:0033818">
    <property type="term" value="F:beta-ketoacyl-acyl-carrier-protein synthase III activity"/>
    <property type="evidence" value="ECO:0007669"/>
    <property type="project" value="UniProtKB-UniRule"/>
</dbReference>
<dbReference type="GO" id="GO:0006633">
    <property type="term" value="P:fatty acid biosynthetic process"/>
    <property type="evidence" value="ECO:0007669"/>
    <property type="project" value="UniProtKB-UniRule"/>
</dbReference>
<dbReference type="CDD" id="cd00830">
    <property type="entry name" value="KAS_III"/>
    <property type="match status" value="1"/>
</dbReference>
<dbReference type="FunFam" id="3.40.47.10:FF:000004">
    <property type="entry name" value="3-oxoacyl-[acyl-carrier-protein] synthase 3"/>
    <property type="match status" value="1"/>
</dbReference>
<dbReference type="Gene3D" id="3.40.47.10">
    <property type="match status" value="1"/>
</dbReference>
<dbReference type="HAMAP" id="MF_01815">
    <property type="entry name" value="FabH"/>
    <property type="match status" value="1"/>
</dbReference>
<dbReference type="InterPro" id="IPR013747">
    <property type="entry name" value="ACP_syn_III_C"/>
</dbReference>
<dbReference type="InterPro" id="IPR013751">
    <property type="entry name" value="ACP_syn_III_N"/>
</dbReference>
<dbReference type="InterPro" id="IPR004655">
    <property type="entry name" value="FabH"/>
</dbReference>
<dbReference type="InterPro" id="IPR016039">
    <property type="entry name" value="Thiolase-like"/>
</dbReference>
<dbReference type="NCBIfam" id="TIGR00747">
    <property type="entry name" value="fabH"/>
    <property type="match status" value="1"/>
</dbReference>
<dbReference type="NCBIfam" id="NF006829">
    <property type="entry name" value="PRK09352.1"/>
    <property type="match status" value="1"/>
</dbReference>
<dbReference type="PANTHER" id="PTHR43091">
    <property type="entry name" value="3-OXOACYL-[ACYL-CARRIER-PROTEIN] SYNTHASE"/>
    <property type="match status" value="1"/>
</dbReference>
<dbReference type="PANTHER" id="PTHR43091:SF1">
    <property type="entry name" value="BETA-KETOACYL-[ACYL-CARRIER-PROTEIN] SYNTHASE III, CHLOROPLASTIC"/>
    <property type="match status" value="1"/>
</dbReference>
<dbReference type="Pfam" id="PF08545">
    <property type="entry name" value="ACP_syn_III"/>
    <property type="match status" value="1"/>
</dbReference>
<dbReference type="Pfam" id="PF08541">
    <property type="entry name" value="ACP_syn_III_C"/>
    <property type="match status" value="1"/>
</dbReference>
<dbReference type="SUPFAM" id="SSF53901">
    <property type="entry name" value="Thiolase-like"/>
    <property type="match status" value="1"/>
</dbReference>
<organism>
    <name type="scientific">Salmonella arizonae (strain ATCC BAA-731 / CDC346-86 / RSK2980)</name>
    <dbReference type="NCBI Taxonomy" id="41514"/>
    <lineage>
        <taxon>Bacteria</taxon>
        <taxon>Pseudomonadati</taxon>
        <taxon>Pseudomonadota</taxon>
        <taxon>Gammaproteobacteria</taxon>
        <taxon>Enterobacterales</taxon>
        <taxon>Enterobacteriaceae</taxon>
        <taxon>Salmonella</taxon>
    </lineage>
</organism>
<name>FABH_SALAR</name>
<keyword id="KW-0012">Acyltransferase</keyword>
<keyword id="KW-0963">Cytoplasm</keyword>
<keyword id="KW-0275">Fatty acid biosynthesis</keyword>
<keyword id="KW-0276">Fatty acid metabolism</keyword>
<keyword id="KW-0444">Lipid biosynthesis</keyword>
<keyword id="KW-0443">Lipid metabolism</keyword>
<keyword id="KW-0511">Multifunctional enzyme</keyword>
<keyword id="KW-1185">Reference proteome</keyword>
<keyword id="KW-0808">Transferase</keyword>
<reference key="1">
    <citation type="submission" date="2007-11" db="EMBL/GenBank/DDBJ databases">
        <authorList>
            <consortium name="The Salmonella enterica serovar Arizonae Genome Sequencing Project"/>
            <person name="McClelland M."/>
            <person name="Sanderson E.K."/>
            <person name="Porwollik S."/>
            <person name="Spieth J."/>
            <person name="Clifton W.S."/>
            <person name="Fulton R."/>
            <person name="Chunyan W."/>
            <person name="Wollam A."/>
            <person name="Shah N."/>
            <person name="Pepin K."/>
            <person name="Bhonagiri V."/>
            <person name="Nash W."/>
            <person name="Johnson M."/>
            <person name="Thiruvilangam P."/>
            <person name="Wilson R."/>
        </authorList>
    </citation>
    <scope>NUCLEOTIDE SEQUENCE [LARGE SCALE GENOMIC DNA]</scope>
    <source>
        <strain>ATCC BAA-731 / CDC346-86 / RSK2980</strain>
    </source>
</reference>
<comment type="function">
    <text evidence="1">Catalyzes the condensation reaction of fatty acid synthesis by the addition to an acyl acceptor of two carbons from malonyl-ACP. Catalyzes the first condensation reaction which initiates fatty acid synthesis and may therefore play a role in governing the total rate of fatty acid production. Possesses both acetoacetyl-ACP synthase and acetyl transacylase activities. Its substrate specificity determines the biosynthesis of branched-chain and/or straight-chain of fatty acids.</text>
</comment>
<comment type="catalytic activity">
    <reaction evidence="1">
        <text>malonyl-[ACP] + acetyl-CoA + H(+) = 3-oxobutanoyl-[ACP] + CO2 + CoA</text>
        <dbReference type="Rhea" id="RHEA:12080"/>
        <dbReference type="Rhea" id="RHEA-COMP:9623"/>
        <dbReference type="Rhea" id="RHEA-COMP:9625"/>
        <dbReference type="ChEBI" id="CHEBI:15378"/>
        <dbReference type="ChEBI" id="CHEBI:16526"/>
        <dbReference type="ChEBI" id="CHEBI:57287"/>
        <dbReference type="ChEBI" id="CHEBI:57288"/>
        <dbReference type="ChEBI" id="CHEBI:78449"/>
        <dbReference type="ChEBI" id="CHEBI:78450"/>
        <dbReference type="EC" id="2.3.1.180"/>
    </reaction>
</comment>
<comment type="pathway">
    <text evidence="1">Lipid metabolism; fatty acid biosynthesis.</text>
</comment>
<comment type="subunit">
    <text evidence="1">Homodimer.</text>
</comment>
<comment type="subcellular location">
    <subcellularLocation>
        <location evidence="1">Cytoplasm</location>
    </subcellularLocation>
</comment>
<comment type="domain">
    <text evidence="1">The last Arg residue of the ACP-binding site is essential for the weak association between ACP/AcpP and FabH.</text>
</comment>
<comment type="similarity">
    <text evidence="1">Belongs to the thiolase-like superfamily. FabH family.</text>
</comment>
<sequence length="317" mass="33582">MYTKIIGTGSYLPEQVRTNADLEKMVETSDEWIVTRTGIRERHIAAPNETVATMGFTAANRALEMAGIDKDQIGLIVVATTSATHAFPSAACQIQSMLGIKGCPAFDVAAACAGFTYALSIADQYVKSGAVKHALVVGSDVLARTCDPSDRGTIIIFGDGAGAVVLSASEEPGIISTHLHADGRYGELLTLPNADRVNPDNPIYLTMAGNEVFKVAVTELAHIVDETLAANNLDRSELDWLVPHQANLRIISATAKKLGMSMDNVVVTLDRHGNTSAASVPCALDEAVRDGRIKAGQLVLLEAFGGGFTWGSALIRF</sequence>
<protein>
    <recommendedName>
        <fullName evidence="1">Beta-ketoacyl-[acyl-carrier-protein] synthase III</fullName>
        <shortName evidence="1">Beta-ketoacyl-ACP synthase III</shortName>
        <shortName evidence="1">KAS III</shortName>
        <ecNumber evidence="1">2.3.1.180</ecNumber>
    </recommendedName>
    <alternativeName>
        <fullName evidence="1">3-oxoacyl-[acyl-carrier-protein] synthase 3</fullName>
    </alternativeName>
    <alternativeName>
        <fullName evidence="1">3-oxoacyl-[acyl-carrier-protein] synthase III</fullName>
    </alternativeName>
</protein>
<feature type="chain" id="PRO_1000088322" description="Beta-ketoacyl-[acyl-carrier-protein] synthase III">
    <location>
        <begin position="1"/>
        <end position="317"/>
    </location>
</feature>
<feature type="region of interest" description="ACP-binding" evidence="1">
    <location>
        <begin position="245"/>
        <end position="249"/>
    </location>
</feature>
<feature type="active site" evidence="1">
    <location>
        <position position="112"/>
    </location>
</feature>
<feature type="active site" evidence="1">
    <location>
        <position position="244"/>
    </location>
</feature>
<feature type="active site" evidence="1">
    <location>
        <position position="274"/>
    </location>
</feature>
<evidence type="ECO:0000255" key="1">
    <source>
        <dbReference type="HAMAP-Rule" id="MF_01815"/>
    </source>
</evidence>
<accession>A9MGC9</accession>